<comment type="function">
    <text evidence="1">RNA-dependent RNA polymerase which is responsible for replication and transcription of virus RNA segments. The transcription of viral mRNAs occurs by a unique mechanism called cap-snatching. 5' methylated caps of cellular mRNAs are cleaved after 10-13 nucleotides by PA. In turn, these short capped RNAs are used as primers by PB1 for transcription of viral mRNAs. During virus replication, PB1 initiates RNA synthesis and copy vRNA into complementary RNA (cRNA) which in turn serves as a template for the production of more vRNAs.</text>
</comment>
<comment type="catalytic activity">
    <reaction evidence="1">
        <text>RNA(n) + a ribonucleoside 5'-triphosphate = RNA(n+1) + diphosphate</text>
        <dbReference type="Rhea" id="RHEA:21248"/>
        <dbReference type="Rhea" id="RHEA-COMP:14527"/>
        <dbReference type="Rhea" id="RHEA-COMP:17342"/>
        <dbReference type="ChEBI" id="CHEBI:33019"/>
        <dbReference type="ChEBI" id="CHEBI:61557"/>
        <dbReference type="ChEBI" id="CHEBI:140395"/>
        <dbReference type="EC" id="2.7.7.48"/>
    </reaction>
</comment>
<comment type="subunit">
    <text evidence="1">Influenza RNA polymerase is composed of three subunits: PB1, PB2 and PA. Interacts (via N-terminus) with PA (via C-terminus). Interacts (via C-terminus) with PB2 (via N-terminus); this interaction is essential for transcription initiation.</text>
</comment>
<comment type="subcellular location">
    <subcellularLocation>
        <location evidence="1">Host nucleus</location>
    </subcellularLocation>
    <subcellularLocation>
        <location evidence="1">Host cytoplasm</location>
    </subcellularLocation>
</comment>
<comment type="PTM">
    <text evidence="1">Phosphorylated by host PRKCA.</text>
</comment>
<comment type="similarity">
    <text evidence="1">Belongs to the influenza viruses polymerase PB1 family.</text>
</comment>
<keyword id="KW-1262">Eukaryotic host gene expression shutoff by virus</keyword>
<keyword id="KW-1191">Eukaryotic host transcription shutoff by virus</keyword>
<keyword id="KW-1035">Host cytoplasm</keyword>
<keyword id="KW-1190">Host gene expression shutoff by virus</keyword>
<keyword id="KW-1048">Host nucleus</keyword>
<keyword id="KW-0945">Host-virus interaction</keyword>
<keyword id="KW-1104">Inhibition of host RNA polymerase II by virus</keyword>
<keyword id="KW-0547">Nucleotide-binding</keyword>
<keyword id="KW-0548">Nucleotidyltransferase</keyword>
<keyword id="KW-0597">Phosphoprotein</keyword>
<keyword id="KW-0696">RNA-directed RNA polymerase</keyword>
<keyword id="KW-0808">Transferase</keyword>
<keyword id="KW-0693">Viral RNA replication</keyword>
<keyword id="KW-1195">Viral transcription</keyword>
<evidence type="ECO:0000255" key="1">
    <source>
        <dbReference type="HAMAP-Rule" id="MF_04065"/>
    </source>
</evidence>
<evidence type="ECO:0000256" key="2">
    <source>
        <dbReference type="SAM" id="MobiDB-lite"/>
    </source>
</evidence>
<organism>
    <name type="scientific">Influenza A virus (strain A/Chicken/Scotland/1959 H5N1)</name>
    <dbReference type="NCBI Taxonomy" id="402527"/>
    <lineage>
        <taxon>Viruses</taxon>
        <taxon>Riboviria</taxon>
        <taxon>Orthornavirae</taxon>
        <taxon>Negarnaviricota</taxon>
        <taxon>Polyploviricotina</taxon>
        <taxon>Insthoviricetes</taxon>
        <taxon>Articulavirales</taxon>
        <taxon>Orthomyxoviridae</taxon>
        <taxon>Alphainfluenzavirus</taxon>
        <taxon>Alphainfluenzavirus influenzae</taxon>
        <taxon>Influenza A virus</taxon>
    </lineage>
</organism>
<protein>
    <recommendedName>
        <fullName evidence="1">RNA-directed RNA polymerase catalytic subunit</fullName>
        <ecNumber evidence="1">2.7.7.48</ecNumber>
    </recommendedName>
    <alternativeName>
        <fullName evidence="1">Polymerase basic protein 1</fullName>
        <shortName evidence="1">PB1</shortName>
    </alternativeName>
    <alternativeName>
        <fullName evidence="1">RNA-directed RNA polymerase subunit P1</fullName>
    </alternativeName>
</protein>
<proteinExistence type="inferred from homology"/>
<name>RDRP_I59A0</name>
<sequence>MDVNPTLLFLKVPAQNAISTTFPYTGDPPYSHGTGTGYTMDTVNRTHQYSEKGKWTTNTETGAPQLNPIDGPLPEDNEPSGYAQTDCVLEAMAFLEESHPGIFENSCLETMEVVQQTRVDKLTQGRQTYDWTLNRNQPAATALANTIEVFRSNGLTANDSGRLIDFLKDVMESMDKEEVEITTHFQRKRRVRDNITKKMVTQRTIGKKKQRLNKRSYLIRALTLNTMTKDAERGKLKRRAIATPGMQIRGFVYFVETLARSICEKLEQSGLPVGGNEKKAKLANVVRKMMTNSQDTELSFTITGDNTKWNENQNPRMFLAMITYITRNQPEWFRNILSIAPIMFSNKMARLGKGYMFESKSMKLRTQIPAEMLASIDLKYFNESTRKKIEKIRPLLIDGTASLSPGMMMGMFNMLSTVLGVSILNLGQKRYTKTTYWWDGLQSSDDFALIVNAPNHEGIQAGVDRFYRTCKLVGINMSKKKSYINRTGTFEFTSFFYRYGFVANFSMELPSFGVSGINESADMSIGVTVIKNNMINNDLGPATAQMALQLFIKDYRYTYRCHRGDTQIQTRRSFELKKLWEQTHSKAGLLVSDGGPNLYNIRNLHIPEVCLKWELMDEDYQGRLCNPLNPFVSHKEIESVNNAVVMPAHGPAKSMEYDAVATTHSWIPKRNRSILNTSQRGILEDEQMYQKCCNLFEKFFPSSSYRRPVGISSMVEAMVSRARIDARIDFESGRIKKEEFAEIMKICSTIEELRRQKQ</sequence>
<reference key="1">
    <citation type="journal article" date="2006" name="Science">
        <title>Large-scale sequence analysis of avian influenza isolates.</title>
        <authorList>
            <person name="Obenauer J.C."/>
            <person name="Denson J."/>
            <person name="Mehta P.K."/>
            <person name="Su X."/>
            <person name="Mukatira S."/>
            <person name="Finkelstein D.B."/>
            <person name="Xu X."/>
            <person name="Wang J."/>
            <person name="Ma J."/>
            <person name="Fan Y."/>
            <person name="Rakestraw K.M."/>
            <person name="Webster R.G."/>
            <person name="Hoffmann E."/>
            <person name="Krauss S."/>
            <person name="Zheng J."/>
            <person name="Zhang Z."/>
            <person name="Naeve C.W."/>
        </authorList>
    </citation>
    <scope>NUCLEOTIDE SEQUENCE [GENOMIC RNA]</scope>
</reference>
<gene>
    <name evidence="1" type="primary">PB1</name>
</gene>
<accession>Q0A2G8</accession>
<feature type="chain" id="PRO_0000309855" description="RNA-directed RNA polymerase catalytic subunit">
    <location>
        <begin position="1"/>
        <end position="758"/>
    </location>
</feature>
<feature type="domain" description="RdRp catalytic" evidence="1">
    <location>
        <begin position="286"/>
        <end position="483"/>
    </location>
</feature>
<feature type="region of interest" description="Disordered" evidence="2">
    <location>
        <begin position="50"/>
        <end position="82"/>
    </location>
</feature>
<feature type="region of interest" description="Promoter-binding site" evidence="1">
    <location>
        <begin position="249"/>
        <end position="256"/>
    </location>
</feature>
<feature type="short sequence motif" description="Nuclear localization signal" evidence="1">
    <location>
        <begin position="187"/>
        <end position="195"/>
    </location>
</feature>
<feature type="short sequence motif" description="Nuclear localization signal" evidence="1">
    <location>
        <begin position="203"/>
        <end position="216"/>
    </location>
</feature>
<feature type="compositionally biased region" description="Polar residues" evidence="2">
    <location>
        <begin position="55"/>
        <end position="64"/>
    </location>
</feature>
<organismHost>
    <name type="scientific">Aves</name>
    <dbReference type="NCBI Taxonomy" id="8782"/>
</organismHost>
<organismHost>
    <name type="scientific">Felis catus</name>
    <name type="common">Cat</name>
    <name type="synonym">Felis silvestris catus</name>
    <dbReference type="NCBI Taxonomy" id="9685"/>
</organismHost>
<organismHost>
    <name type="scientific">Homo sapiens</name>
    <name type="common">Human</name>
    <dbReference type="NCBI Taxonomy" id="9606"/>
</organismHost>
<organismHost>
    <name type="scientific">Panthera pardus</name>
    <name type="common">Leopard</name>
    <name type="synonym">Felis pardus</name>
    <dbReference type="NCBI Taxonomy" id="9691"/>
</organismHost>
<organismHost>
    <name type="scientific">Panthera tigris</name>
    <name type="common">Tiger</name>
    <dbReference type="NCBI Taxonomy" id="9694"/>
</organismHost>
<organismHost>
    <name type="scientific">Sus scrofa</name>
    <name type="common">Pig</name>
    <dbReference type="NCBI Taxonomy" id="9823"/>
</organismHost>
<dbReference type="EC" id="2.7.7.48" evidence="1"/>
<dbReference type="EMBL" id="CY015087">
    <property type="protein sequence ID" value="ABI85114.1"/>
    <property type="molecule type" value="Genomic_RNA"/>
</dbReference>
<dbReference type="SMR" id="Q0A2G8"/>
<dbReference type="Proteomes" id="UP000169634">
    <property type="component" value="Genome"/>
</dbReference>
<dbReference type="GO" id="GO:0030430">
    <property type="term" value="C:host cell cytoplasm"/>
    <property type="evidence" value="ECO:0007669"/>
    <property type="project" value="UniProtKB-SubCell"/>
</dbReference>
<dbReference type="GO" id="GO:0042025">
    <property type="term" value="C:host cell nucleus"/>
    <property type="evidence" value="ECO:0007669"/>
    <property type="project" value="UniProtKB-SubCell"/>
</dbReference>
<dbReference type="GO" id="GO:0000166">
    <property type="term" value="F:nucleotide binding"/>
    <property type="evidence" value="ECO:0007669"/>
    <property type="project" value="UniProtKB-UniRule"/>
</dbReference>
<dbReference type="GO" id="GO:0003723">
    <property type="term" value="F:RNA binding"/>
    <property type="evidence" value="ECO:0007669"/>
    <property type="project" value="InterPro"/>
</dbReference>
<dbReference type="GO" id="GO:0003968">
    <property type="term" value="F:RNA-directed RNA polymerase activity"/>
    <property type="evidence" value="ECO:0007669"/>
    <property type="project" value="UniProtKB-UniRule"/>
</dbReference>
<dbReference type="GO" id="GO:0006351">
    <property type="term" value="P:DNA-templated transcription"/>
    <property type="evidence" value="ECO:0007669"/>
    <property type="project" value="UniProtKB-UniRule"/>
</dbReference>
<dbReference type="GO" id="GO:0039657">
    <property type="term" value="P:symbiont-mediated suppression of host gene expression"/>
    <property type="evidence" value="ECO:0007669"/>
    <property type="project" value="UniProtKB-KW"/>
</dbReference>
<dbReference type="GO" id="GO:0039523">
    <property type="term" value="P:symbiont-mediated suppression of host mRNA transcription via inhibition of RNA polymerase II activity"/>
    <property type="evidence" value="ECO:0007669"/>
    <property type="project" value="UniProtKB-UniRule"/>
</dbReference>
<dbReference type="GO" id="GO:0039694">
    <property type="term" value="P:viral RNA genome replication"/>
    <property type="evidence" value="ECO:0007669"/>
    <property type="project" value="UniProtKB-UniRule"/>
</dbReference>
<dbReference type="GO" id="GO:0019083">
    <property type="term" value="P:viral transcription"/>
    <property type="evidence" value="ECO:0007669"/>
    <property type="project" value="UniProtKB-KW"/>
</dbReference>
<dbReference type="Gene3D" id="6.10.140.720">
    <property type="match status" value="1"/>
</dbReference>
<dbReference type="HAMAP" id="MF_04065">
    <property type="entry name" value="INFV_RDRP"/>
    <property type="match status" value="1"/>
</dbReference>
<dbReference type="InterPro" id="IPR007099">
    <property type="entry name" value="RNA-dir_pol_NSvirus"/>
</dbReference>
<dbReference type="InterPro" id="IPR001407">
    <property type="entry name" value="RNA_pol_PB1_influenza"/>
</dbReference>
<dbReference type="Pfam" id="PF00602">
    <property type="entry name" value="Flu_PB1"/>
    <property type="match status" value="1"/>
</dbReference>
<dbReference type="PIRSF" id="PIRSF000827">
    <property type="entry name" value="RdRPol_OMV"/>
    <property type="match status" value="1"/>
</dbReference>
<dbReference type="PROSITE" id="PS50525">
    <property type="entry name" value="RDRP_SSRNA_NEG_SEG"/>
    <property type="match status" value="1"/>
</dbReference>